<feature type="chain" id="PRO_0000183171" description="Tudor domain-containing protein 7">
    <location>
        <begin position="1"/>
        <end position="1113"/>
    </location>
</feature>
<feature type="domain" description="HTH OST-type 1" evidence="3">
    <location>
        <begin position="3"/>
        <end position="76"/>
    </location>
</feature>
<feature type="domain" description="HTH OST-type 2" evidence="3">
    <location>
        <begin position="249"/>
        <end position="318"/>
    </location>
</feature>
<feature type="domain" description="HTH OST-type 3" evidence="3">
    <location>
        <begin position="352"/>
        <end position="421"/>
    </location>
</feature>
<feature type="domain" description="Tudor 1" evidence="2">
    <location>
        <begin position="528"/>
        <end position="585"/>
    </location>
</feature>
<feature type="domain" description="Tudor 2" evidence="2">
    <location>
        <begin position="718"/>
        <end position="775"/>
    </location>
</feature>
<feature type="region of interest" description="Disordered" evidence="4">
    <location>
        <begin position="320"/>
        <end position="352"/>
    </location>
</feature>
<feature type="region of interest" description="Disordered" evidence="4">
    <location>
        <begin position="873"/>
        <end position="895"/>
    </location>
</feature>
<feature type="region of interest" description="Interaction with CDK17" evidence="5">
    <location>
        <begin position="876"/>
        <end position="1113"/>
    </location>
</feature>
<feature type="region of interest" description="Interaction with CABLES1" evidence="1">
    <location>
        <begin position="908"/>
        <end position="1113"/>
    </location>
</feature>
<feature type="compositionally biased region" description="Basic and acidic residues" evidence="4">
    <location>
        <begin position="320"/>
        <end position="334"/>
    </location>
</feature>
<feature type="compositionally biased region" description="Polar residues" evidence="4">
    <location>
        <begin position="875"/>
        <end position="884"/>
    </location>
</feature>
<feature type="modified residue" description="Phosphoserine" evidence="8">
    <location>
        <position position="874"/>
    </location>
</feature>
<feature type="splice variant" id="VSP_041317" description="In isoform 2." evidence="6">
    <original>SVTVLRSHPEASKLQFMGYSPKPHCLLL</original>
    <variation>R</variation>
    <location>
        <begin position="177"/>
        <end position="204"/>
    </location>
</feature>
<name>TDRD7_RAT</name>
<dbReference type="EMBL" id="AB030644">
    <property type="protein sequence ID" value="BAA82968.1"/>
    <property type="molecule type" value="mRNA"/>
</dbReference>
<dbReference type="EMBL" id="BC090066">
    <property type="protein sequence ID" value="AAH90066.1"/>
    <property type="molecule type" value="mRNA"/>
</dbReference>
<dbReference type="RefSeq" id="NP_001421481.1">
    <molecule id="Q9R1R4-2"/>
    <property type="nucleotide sequence ID" value="NM_001434552.1"/>
</dbReference>
<dbReference type="RefSeq" id="NP_001421482.1">
    <molecule id="Q9R1R4-2"/>
    <property type="nucleotide sequence ID" value="NM_001434553.1"/>
</dbReference>
<dbReference type="RefSeq" id="NP_620226.1">
    <molecule id="Q9R1R4-1"/>
    <property type="nucleotide sequence ID" value="NM_138871.2"/>
</dbReference>
<dbReference type="RefSeq" id="XP_006238173.1">
    <property type="nucleotide sequence ID" value="XM_006238111.3"/>
</dbReference>
<dbReference type="RefSeq" id="XP_008761926.1">
    <property type="nucleotide sequence ID" value="XM_008763704.1"/>
</dbReference>
<dbReference type="RefSeq" id="XP_017449156.1">
    <molecule id="Q9R1R4-1"/>
    <property type="nucleotide sequence ID" value="XM_017593667.3"/>
</dbReference>
<dbReference type="BMRB" id="Q9R1R4"/>
<dbReference type="SMR" id="Q9R1R4"/>
<dbReference type="FunCoup" id="Q9R1R4">
    <property type="interactions" value="972"/>
</dbReference>
<dbReference type="STRING" id="10116.ENSRNOP00000068568"/>
<dbReference type="iPTMnet" id="Q9R1R4"/>
<dbReference type="PhosphoSitePlus" id="Q9R1R4"/>
<dbReference type="PaxDb" id="10116-ENSRNOP00000013726"/>
<dbReference type="Ensembl" id="ENSRNOT00000085738.2">
    <molecule id="Q9R1R4-1"/>
    <property type="protein sequence ID" value="ENSRNOP00000068568.1"/>
    <property type="gene ID" value="ENSRNOG00000055779.2"/>
</dbReference>
<dbReference type="GeneID" id="85425"/>
<dbReference type="KEGG" id="rno:85425"/>
<dbReference type="UCSC" id="RGD:619724">
    <molecule id="Q9R1R4-1"/>
    <property type="organism name" value="rat"/>
</dbReference>
<dbReference type="AGR" id="RGD:619724"/>
<dbReference type="CTD" id="23424"/>
<dbReference type="RGD" id="619724">
    <property type="gene designation" value="Tdrd7"/>
</dbReference>
<dbReference type="eggNOG" id="KOG2039">
    <property type="taxonomic scope" value="Eukaryota"/>
</dbReference>
<dbReference type="GeneTree" id="ENSGT00890000139482"/>
<dbReference type="InParanoid" id="Q9R1R4"/>
<dbReference type="OrthoDB" id="49435at9989"/>
<dbReference type="PhylomeDB" id="Q9R1R4"/>
<dbReference type="PRO" id="PR:Q9R1R4"/>
<dbReference type="Proteomes" id="UP000002494">
    <property type="component" value="Chromosome 5"/>
</dbReference>
<dbReference type="Bgee" id="ENSRNOG00000055779">
    <property type="expression patterns" value="Expressed in testis and 19 other cell types or tissues"/>
</dbReference>
<dbReference type="GO" id="GO:0033391">
    <property type="term" value="C:chromatoid body"/>
    <property type="evidence" value="ECO:0000266"/>
    <property type="project" value="RGD"/>
</dbReference>
<dbReference type="GO" id="GO:0005737">
    <property type="term" value="C:cytoplasm"/>
    <property type="evidence" value="ECO:0000266"/>
    <property type="project" value="RGD"/>
</dbReference>
<dbReference type="GO" id="GO:0043186">
    <property type="term" value="C:P granule"/>
    <property type="evidence" value="ECO:0000266"/>
    <property type="project" value="RGD"/>
</dbReference>
<dbReference type="GO" id="GO:1990904">
    <property type="term" value="C:ribonucleoprotein complex"/>
    <property type="evidence" value="ECO:0000266"/>
    <property type="project" value="RGD"/>
</dbReference>
<dbReference type="GO" id="GO:0035770">
    <property type="term" value="C:ribonucleoprotein granule"/>
    <property type="evidence" value="ECO:0000250"/>
    <property type="project" value="UniProtKB"/>
</dbReference>
<dbReference type="GO" id="GO:0003729">
    <property type="term" value="F:mRNA binding"/>
    <property type="evidence" value="ECO:0000250"/>
    <property type="project" value="UniProtKB"/>
</dbReference>
<dbReference type="GO" id="GO:0007281">
    <property type="term" value="P:germ cell development"/>
    <property type="evidence" value="ECO:0000266"/>
    <property type="project" value="RGD"/>
</dbReference>
<dbReference type="GO" id="GO:0070306">
    <property type="term" value="P:lens fiber cell differentiation"/>
    <property type="evidence" value="ECO:0000250"/>
    <property type="project" value="UniProtKB"/>
</dbReference>
<dbReference type="GO" id="GO:0002089">
    <property type="term" value="P:lens morphogenesis in camera-type eye"/>
    <property type="evidence" value="ECO:0000250"/>
    <property type="project" value="UniProtKB"/>
</dbReference>
<dbReference type="GO" id="GO:0030719">
    <property type="term" value="P:P granule organization"/>
    <property type="evidence" value="ECO:0000318"/>
    <property type="project" value="GO_Central"/>
</dbReference>
<dbReference type="GO" id="GO:0034587">
    <property type="term" value="P:piRNA processing"/>
    <property type="evidence" value="ECO:0000318"/>
    <property type="project" value="GO_Central"/>
</dbReference>
<dbReference type="GO" id="GO:0010608">
    <property type="term" value="P:post-transcriptional regulation of gene expression"/>
    <property type="evidence" value="ECO:0000250"/>
    <property type="project" value="UniProtKB"/>
</dbReference>
<dbReference type="GO" id="GO:0007283">
    <property type="term" value="P:spermatogenesis"/>
    <property type="evidence" value="ECO:0000250"/>
    <property type="project" value="UniProtKB"/>
</dbReference>
<dbReference type="CDD" id="cd09986">
    <property type="entry name" value="LOTUS_1_TDRD7"/>
    <property type="match status" value="1"/>
</dbReference>
<dbReference type="CDD" id="cd09973">
    <property type="entry name" value="LOTUS_2_TDRD7"/>
    <property type="match status" value="1"/>
</dbReference>
<dbReference type="CDD" id="cd09974">
    <property type="entry name" value="LOTUS_3_TDRD7"/>
    <property type="match status" value="1"/>
</dbReference>
<dbReference type="CDD" id="cd20428">
    <property type="entry name" value="Tudor_TDRD7_rpt2"/>
    <property type="match status" value="1"/>
</dbReference>
<dbReference type="CDD" id="cd20429">
    <property type="entry name" value="Tudor_TDRD7_rpt3"/>
    <property type="match status" value="1"/>
</dbReference>
<dbReference type="FunFam" id="3.30.420.610:FF:000008">
    <property type="entry name" value="Tudor domain-containing protein 7"/>
    <property type="match status" value="1"/>
</dbReference>
<dbReference type="FunFam" id="2.30.30.140:FF:000065">
    <property type="entry name" value="tudor domain-containing protein 7"/>
    <property type="match status" value="1"/>
</dbReference>
<dbReference type="FunFam" id="2.30.30.140:FF:000045">
    <property type="entry name" value="tudor domain-containing protein 7 isoform X1"/>
    <property type="match status" value="1"/>
</dbReference>
<dbReference type="FunFam" id="3.30.420.610:FF:000009">
    <property type="entry name" value="Tudor domain-containing protein 7 isoform X2"/>
    <property type="match status" value="1"/>
</dbReference>
<dbReference type="FunFam" id="2.30.30.140:FF:000053">
    <property type="entry name" value="tudor domain-containing protein 7 isoform X2"/>
    <property type="match status" value="1"/>
</dbReference>
<dbReference type="FunFam" id="3.30.420.610:FF:000006">
    <property type="entry name" value="tudor domain-containing protein 7 isoform X2"/>
    <property type="match status" value="1"/>
</dbReference>
<dbReference type="Gene3D" id="2.30.30.140">
    <property type="match status" value="3"/>
</dbReference>
<dbReference type="Gene3D" id="2.40.50.90">
    <property type="match status" value="3"/>
</dbReference>
<dbReference type="Gene3D" id="3.30.420.610">
    <property type="entry name" value="LOTUS domain-like"/>
    <property type="match status" value="3"/>
</dbReference>
<dbReference type="InterPro" id="IPR041966">
    <property type="entry name" value="LOTUS-like"/>
</dbReference>
<dbReference type="InterPro" id="IPR025605">
    <property type="entry name" value="OST-HTH/LOTUS_dom"/>
</dbReference>
<dbReference type="InterPro" id="IPR035437">
    <property type="entry name" value="SNase_OB-fold_sf"/>
</dbReference>
<dbReference type="InterPro" id="IPR037978">
    <property type="entry name" value="TDRD7_LOTUS_3"/>
</dbReference>
<dbReference type="InterPro" id="IPR002999">
    <property type="entry name" value="Tudor"/>
</dbReference>
<dbReference type="InterPro" id="IPR050621">
    <property type="entry name" value="Tudor_domain_containing"/>
</dbReference>
<dbReference type="InterPro" id="IPR047448">
    <property type="entry name" value="Tudor_TDRD7_rpt2"/>
</dbReference>
<dbReference type="InterPro" id="IPR047449">
    <property type="entry name" value="Tudor_TDRD7_rpt3"/>
</dbReference>
<dbReference type="PANTHER" id="PTHR22948">
    <property type="entry name" value="TUDOR DOMAIN CONTAINING PROTEIN"/>
    <property type="match status" value="1"/>
</dbReference>
<dbReference type="PANTHER" id="PTHR22948:SF14">
    <property type="entry name" value="TUDOR DOMAIN-CONTAINING PROTEIN 7"/>
    <property type="match status" value="1"/>
</dbReference>
<dbReference type="Pfam" id="PF12872">
    <property type="entry name" value="OST-HTH"/>
    <property type="match status" value="1"/>
</dbReference>
<dbReference type="Pfam" id="PF00567">
    <property type="entry name" value="TUDOR"/>
    <property type="match status" value="3"/>
</dbReference>
<dbReference type="SMART" id="SM00333">
    <property type="entry name" value="TUDOR"/>
    <property type="match status" value="3"/>
</dbReference>
<dbReference type="SUPFAM" id="SSF63748">
    <property type="entry name" value="Tudor/PWWP/MBT"/>
    <property type="match status" value="3"/>
</dbReference>
<dbReference type="PROSITE" id="PS51644">
    <property type="entry name" value="HTH_OST"/>
    <property type="match status" value="3"/>
</dbReference>
<dbReference type="PROSITE" id="PS50304">
    <property type="entry name" value="TUDOR"/>
    <property type="match status" value="2"/>
</dbReference>
<reference key="1">
    <citation type="journal article" date="2000" name="Eur. J. Biochem.">
        <title>Identification of tudor repeat associator with PCTAIRE 2 (Trap). A novel protein that interacts with the N-terminal domain of PCTAIRE 2 in rat brain.</title>
        <authorList>
            <person name="Hirose T."/>
            <person name="Kawabuchi M."/>
            <person name="Tamaru T."/>
            <person name="Okumura N."/>
            <person name="Nagai K."/>
            <person name="Okada M."/>
        </authorList>
    </citation>
    <scope>NUCLEOTIDE SEQUENCE [MRNA] (ISOFORM 1)</scope>
    <scope>TISSUE SPECIFICITY</scope>
    <scope>DEVELOPMENTAL STAGE</scope>
    <scope>SUBCELLULAR LOCATION</scope>
    <scope>IDENTIFICATION IN A COMPLEX WITH CDK16 AND CDK17</scope>
    <scope>INTERACTION WITH CDK17</scope>
    <source>
        <tissue>Hypothalamus</tissue>
    </source>
</reference>
<reference key="2">
    <citation type="journal article" date="2004" name="Genome Res.">
        <title>The status, quality, and expansion of the NIH full-length cDNA project: the Mammalian Gene Collection (MGC).</title>
        <authorList>
            <consortium name="The MGC Project Team"/>
        </authorList>
    </citation>
    <scope>NUCLEOTIDE SEQUENCE [LARGE SCALE MRNA] (ISOFORM 2)</scope>
    <source>
        <tissue>Lung</tissue>
    </source>
</reference>
<reference key="3">
    <citation type="journal article" date="2012" name="Nat. Commun.">
        <title>Quantitative maps of protein phosphorylation sites across 14 different rat organs and tissues.</title>
        <authorList>
            <person name="Lundby A."/>
            <person name="Secher A."/>
            <person name="Lage K."/>
            <person name="Nordsborg N.B."/>
            <person name="Dmytriyev A."/>
            <person name="Lundby C."/>
            <person name="Olsen J.V."/>
        </authorList>
    </citation>
    <scope>PHOSPHORYLATION [LARGE SCALE ANALYSIS] AT SER-874</scope>
    <scope>IDENTIFICATION BY MASS SPECTROMETRY [LARGE SCALE ANALYSIS]</scope>
</reference>
<organism>
    <name type="scientific">Rattus norvegicus</name>
    <name type="common">Rat</name>
    <dbReference type="NCBI Taxonomy" id="10116"/>
    <lineage>
        <taxon>Eukaryota</taxon>
        <taxon>Metazoa</taxon>
        <taxon>Chordata</taxon>
        <taxon>Craniata</taxon>
        <taxon>Vertebrata</taxon>
        <taxon>Euteleostomi</taxon>
        <taxon>Mammalia</taxon>
        <taxon>Eutheria</taxon>
        <taxon>Euarchontoglires</taxon>
        <taxon>Glires</taxon>
        <taxon>Rodentia</taxon>
        <taxon>Myomorpha</taxon>
        <taxon>Muroidea</taxon>
        <taxon>Muridae</taxon>
        <taxon>Murinae</taxon>
        <taxon>Rattus</taxon>
    </lineage>
</organism>
<comment type="function">
    <text evidence="1">Component of specific cytoplasmic RNA granules involved in post-transcriptional regulation of specific genes: probably acts by binding to specific mRNAs and regulating their translation. Required for lens transparency during lens development, by regulating translation of genes such as CRYBB3 and HSPB1 in the developing lens. Also required during spermatogenesis (By similarity).</text>
</comment>
<comment type="subunit">
    <text evidence="1">Found in a mRNP complex, at least composed of TDRD1, TDRD6, TDRD7 and DDX4. Found in a complex containing CABLES1, CDK16 and CDK17. Interacts with CABLES1, CDK17 and PIWIL1 (By similarity).</text>
</comment>
<comment type="subcellular location">
    <subcellularLocation>
        <location evidence="1">Cytoplasm</location>
    </subcellularLocation>
    <text evidence="1 5">Localizes to cytoplasmic RNA granules (By similarity). Present in chromatoid body (CB) of spermatids (mammalian counterpart of germplasm, pole plasm or polar granules in Drosophila germ cells), also named processing bodies (P-bodies) in somatic cells. Detected in the multilobular cytoplasmic CBs (also called intermitochondrial cementin) in pachytene spermatocytes and as a single perinuclear CB in haploid round spermatids (By similarity). According to PubMed:10727952 localizes preferentially on the periphery of mitochondria.</text>
</comment>
<comment type="alternative products">
    <event type="alternative splicing"/>
    <isoform>
        <id>Q9R1R4-1</id>
        <name>1</name>
        <sequence type="displayed"/>
    </isoform>
    <isoform>
        <id>Q9R1R4-2</id>
        <name>2</name>
        <sequence type="described" ref="VSP_041317"/>
    </isoform>
</comment>
<comment type="tissue specificity">
    <text evidence="5">Expressed in brain and testis.</text>
</comment>
<comment type="developmental stage">
    <text evidence="5">Expressed in embryo at 16 dpc onwards.</text>
</comment>
<comment type="similarity">
    <text evidence="7">Belongs to the TDRD7 family.</text>
</comment>
<sequence>MLEADLVSKMLRAVLQSHKNGIVLPRLQGEYRSLTGDWIPFKQLGYPTLEAYLRSVPAVVRIEASRSGEIVCYAVACTETARIAQLVARQRTSKRKTGRQINCQMRVKKTMPFFLEGKPKATLRQPGFASDYSISKKPNPTLLREKGSTLGAKADVDMPPYPDAPVQRHVSMSANSSVTVLRSHPEASKLQFMGYSPKPHCLLLFSPKSSLPAPFQTHISRACPKEVNDNLNQTVEKPNVTPPASYTNKMDEVQNRIKEILDKHNNGIWISKLPHFYKEFYKEDLNQGVLQQFEHWPHICTVEKPCGGGQDLLLYPAKREQPLRSDQDPEKERPPPPPAPRQEVPSKGSPAVMPDVKEKVAELLGKYSSGLWASALPKAFEDMYKVKFPEDALKNLASLSDVCTINYISGNTQKAILYAKLPLPTDKILKDEAQAQGDFDIKSMIEQEYLQIEKNMAESADDFVEDITVPPLVIPTEASPSVLVVELSNTNDVVIRYVGKDYSAAQELMEDEMKEYYSRNPRVTPIQTVHVGQLLAVNAEEDAWLRAQIISTDENKIKVCYVDYGFCENIEKSKAYRLNPRFCSLSFQATKCKLAGLEILNDDPNLVKVVESLTCGKIFAVEILDKSDIPLVVLYDTSGEDDININATCLKAICDRSLEVHLQVDAMYTNVKVTNICSDGTLYCQVPCKGLNKLNDLLHKTEDYFHCKHMTSEYFISLPFCGKICLFHCKGKWLRVEITNVHSSRALDVQFLDSGNSTSVKVSELREIPPRFLQEMLAIPPQAIKCCLADLPQSIGMWTPDAVLWLRDSVLNCSDCSIKVTKVDEARGVAYVYLFTPKNFPDPHRSINRQITNADLWKHQKDVFLSAVSAAASSPGNRNASTPAPGSPAESLRKSHPEVLRKSVLDHTSSFSLEELPPPVHLSKSGEHMDVYVPVACHPGHFVIQPWQEIHKLEVLMEEMILYYSVSEERHIAVERDQVYAAKVENKWYRVLLKGILTNGLVSVYELDYGKHELVNIRKVQPLVDVFRKLPFQAVTAQLAGVKCSQWSEEASMVFRNHVEKKPLVALVQTVIEHANPWDRKVVVYLVDTSLPDTDTWIHDFMSQYLVELSKAN</sequence>
<proteinExistence type="evidence at protein level"/>
<evidence type="ECO:0000250" key="1"/>
<evidence type="ECO:0000255" key="2">
    <source>
        <dbReference type="PROSITE-ProRule" id="PRU00211"/>
    </source>
</evidence>
<evidence type="ECO:0000255" key="3">
    <source>
        <dbReference type="PROSITE-ProRule" id="PRU00975"/>
    </source>
</evidence>
<evidence type="ECO:0000256" key="4">
    <source>
        <dbReference type="SAM" id="MobiDB-lite"/>
    </source>
</evidence>
<evidence type="ECO:0000269" key="5">
    <source>
    </source>
</evidence>
<evidence type="ECO:0000303" key="6">
    <source>
    </source>
</evidence>
<evidence type="ECO:0000305" key="7"/>
<evidence type="ECO:0007744" key="8">
    <source>
    </source>
</evidence>
<keyword id="KW-0025">Alternative splicing</keyword>
<keyword id="KW-0963">Cytoplasm</keyword>
<keyword id="KW-0221">Differentiation</keyword>
<keyword id="KW-0597">Phosphoprotein</keyword>
<keyword id="KW-1185">Reference proteome</keyword>
<keyword id="KW-0677">Repeat</keyword>
<keyword id="KW-0694">RNA-binding</keyword>
<keyword id="KW-0744">Spermatogenesis</keyword>
<protein>
    <recommendedName>
        <fullName>Tudor domain-containing protein 7</fullName>
    </recommendedName>
    <alternativeName>
        <fullName>PCTAIRE2-binding protein</fullName>
    </alternativeName>
    <alternativeName>
        <fullName>Tudor repeat associator with PCTAIRE-2</fullName>
        <shortName>Trap</shortName>
    </alternativeName>
</protein>
<gene>
    <name type="primary">Tdrd7</name>
    <name type="synonym">Pctaire2bp</name>
</gene>
<accession>Q9R1R4</accession>
<accession>Q5FVD0</accession>